<accession>P9WJG1</accession>
<accession>F2GLB2</accession>
<accession>L0TDN3</accession>
<accession>P71630</accession>
<accession>Q7D6I2</accession>
<protein>
    <recommendedName>
        <fullName>CRISPR system Cms protein Csm2</fullName>
    </recommendedName>
    <alternativeName>
        <fullName>CRISPR type III A-associated protein Csm2</fullName>
    </alternativeName>
</protein>
<evidence type="ECO:0000250" key="1">
    <source>
        <dbReference type="UniProtKB" id="A0A0A7HIX1"/>
    </source>
</evidence>
<evidence type="ECO:0000269" key="2">
    <source>
    </source>
</evidence>
<evidence type="ECO:0000305" key="3"/>
<evidence type="ECO:0000305" key="4">
    <source>
    </source>
</evidence>
<reference key="1">
    <citation type="journal article" date="1998" name="Nature">
        <title>Deciphering the biology of Mycobacterium tuberculosis from the complete genome sequence.</title>
        <authorList>
            <person name="Cole S.T."/>
            <person name="Brosch R."/>
            <person name="Parkhill J."/>
            <person name="Garnier T."/>
            <person name="Churcher C.M."/>
            <person name="Harris D.E."/>
            <person name="Gordon S.V."/>
            <person name="Eiglmeier K."/>
            <person name="Gas S."/>
            <person name="Barry C.E. III"/>
            <person name="Tekaia F."/>
            <person name="Badcock K."/>
            <person name="Basham D."/>
            <person name="Brown D."/>
            <person name="Chillingworth T."/>
            <person name="Connor R."/>
            <person name="Davies R.M."/>
            <person name="Devlin K."/>
            <person name="Feltwell T."/>
            <person name="Gentles S."/>
            <person name="Hamlin N."/>
            <person name="Holroyd S."/>
            <person name="Hornsby T."/>
            <person name="Jagels K."/>
            <person name="Krogh A."/>
            <person name="McLean J."/>
            <person name="Moule S."/>
            <person name="Murphy L.D."/>
            <person name="Oliver S."/>
            <person name="Osborne J."/>
            <person name="Quail M.A."/>
            <person name="Rajandream M.A."/>
            <person name="Rogers J."/>
            <person name="Rutter S."/>
            <person name="Seeger K."/>
            <person name="Skelton S."/>
            <person name="Squares S."/>
            <person name="Squares R."/>
            <person name="Sulston J.E."/>
            <person name="Taylor K."/>
            <person name="Whitehead S."/>
            <person name="Barrell B.G."/>
        </authorList>
    </citation>
    <scope>NUCLEOTIDE SEQUENCE [LARGE SCALE GENOMIC DNA]</scope>
    <source>
        <strain>ATCC 25618 / H37Rv</strain>
    </source>
</reference>
<reference key="2">
    <citation type="journal article" date="2011" name="Mol. Cell. Proteomics">
        <title>Proteogenomic analysis of Mycobacterium tuberculosis by high resolution mass spectrometry.</title>
        <authorList>
            <person name="Kelkar D.S."/>
            <person name="Kumar D."/>
            <person name="Kumar P."/>
            <person name="Balakrishnan L."/>
            <person name="Muthusamy B."/>
            <person name="Yadav A.K."/>
            <person name="Shrivastava P."/>
            <person name="Marimuthu A."/>
            <person name="Anand S."/>
            <person name="Sundaram H."/>
            <person name="Kingsbury R."/>
            <person name="Harsha H.C."/>
            <person name="Nair B."/>
            <person name="Prasad T.S."/>
            <person name="Chauhan D.S."/>
            <person name="Katoch K."/>
            <person name="Katoch V.M."/>
            <person name="Kumar P."/>
            <person name="Chaerkady R."/>
            <person name="Ramachandran S."/>
            <person name="Dash D."/>
            <person name="Pandey A."/>
        </authorList>
    </citation>
    <scope>IDENTIFICATION BY MASS SPECTROMETRY [LARGE SCALE ANALYSIS]</scope>
    <source>
        <strain>ATCC 25618 / H37Rv</strain>
    </source>
</reference>
<reference key="3">
    <citation type="journal article" date="2019" name="FASEB J.">
        <title>Mycobacterium tuberculosis type III-A CRISPR/Cas system crRNA and its maturation have atypical features.</title>
        <authorList>
            <person name="Wei W."/>
            <person name="Zhang S."/>
            <person name="Fleming J."/>
            <person name="Chen Y."/>
            <person name="Li Z."/>
            <person name="Fan S."/>
            <person name="Liu Y."/>
            <person name="Wang W."/>
            <person name="Wang T."/>
            <person name="Liu Y."/>
            <person name="Ren B."/>
            <person name="Wang M."/>
            <person name="Jiao J."/>
            <person name="Chen Y."/>
            <person name="Zhou Y."/>
            <person name="Zhou Y."/>
            <person name="Gu S."/>
            <person name="Zhang X."/>
            <person name="Wan L."/>
            <person name="Chen T."/>
            <person name="Zhou L."/>
            <person name="Chen Y."/>
            <person name="Zhang X.E."/>
            <person name="Li C."/>
            <person name="Zhang H."/>
            <person name="Bi L."/>
        </authorList>
    </citation>
    <scope>FUNCTION IN PLASMID RESISTANCE</scope>
    <scope>SUBUNIT</scope>
    <scope>DISRUPTION PHENOTYPE</scope>
    <source>
        <strain>H37Rv</strain>
    </source>
</reference>
<dbReference type="EMBL" id="AL123456">
    <property type="protein sequence ID" value="CCP45622.1"/>
    <property type="molecule type" value="Genomic_DNA"/>
</dbReference>
<dbReference type="PIR" id="A70692">
    <property type="entry name" value="A70692"/>
</dbReference>
<dbReference type="RefSeq" id="NP_217338.1">
    <property type="nucleotide sequence ID" value="NC_000962.3"/>
</dbReference>
<dbReference type="RefSeq" id="WP_003414296.1">
    <property type="nucleotide sequence ID" value="NZ_NVQJ01000006.1"/>
</dbReference>
<dbReference type="SMR" id="P9WJG1"/>
<dbReference type="STRING" id="83332.Rv2822c"/>
<dbReference type="PaxDb" id="83332-Rv2822c"/>
<dbReference type="DNASU" id="887778"/>
<dbReference type="GeneID" id="887778"/>
<dbReference type="KEGG" id="mtu:Rv2822c"/>
<dbReference type="KEGG" id="mtv:RVBD_2822c"/>
<dbReference type="TubercuList" id="Rv2822c"/>
<dbReference type="eggNOG" id="COG1421">
    <property type="taxonomic scope" value="Bacteria"/>
</dbReference>
<dbReference type="InParanoid" id="P9WJG1"/>
<dbReference type="OrthoDB" id="9775362at2"/>
<dbReference type="Proteomes" id="UP000001584">
    <property type="component" value="Chromosome"/>
</dbReference>
<dbReference type="GO" id="GO:0003723">
    <property type="term" value="F:RNA binding"/>
    <property type="evidence" value="ECO:0007669"/>
    <property type="project" value="UniProtKB-KW"/>
</dbReference>
<dbReference type="GO" id="GO:0051607">
    <property type="term" value="P:defense response to virus"/>
    <property type="evidence" value="ECO:0007669"/>
    <property type="project" value="UniProtKB-KW"/>
</dbReference>
<dbReference type="CDD" id="cd09647">
    <property type="entry name" value="Csm2_III-A"/>
    <property type="match status" value="1"/>
</dbReference>
<dbReference type="InterPro" id="IPR010149">
    <property type="entry name" value="CRISPR-assoc_prot_Csm2_III-A"/>
</dbReference>
<dbReference type="NCBIfam" id="TIGR01870">
    <property type="entry name" value="cas_TM1810_Csm2"/>
    <property type="match status" value="1"/>
</dbReference>
<dbReference type="Pfam" id="PF03750">
    <property type="entry name" value="Csm2_III-A"/>
    <property type="match status" value="1"/>
</dbReference>
<feature type="chain" id="PRO_0000418225" description="CRISPR system Cms protein Csm2">
    <location>
        <begin position="1"/>
        <end position="124"/>
    </location>
</feature>
<organism>
    <name type="scientific">Mycobacterium tuberculosis (strain ATCC 25618 / H37Rv)</name>
    <dbReference type="NCBI Taxonomy" id="83332"/>
    <lineage>
        <taxon>Bacteria</taxon>
        <taxon>Bacillati</taxon>
        <taxon>Actinomycetota</taxon>
        <taxon>Actinomycetes</taxon>
        <taxon>Mycobacteriales</taxon>
        <taxon>Mycobacteriaceae</taxon>
        <taxon>Mycobacterium</taxon>
        <taxon>Mycobacterium tuberculosis complex</taxon>
    </lineage>
</organism>
<proteinExistence type="evidence at protein level"/>
<name>CSM2_MYCTU</name>
<gene>
    <name type="primary">csm2</name>
    <name type="ordered locus">Rv2822c</name>
</gene>
<comment type="function">
    <text evidence="2 4">CRISPR (clustered regularly interspaced short palindromic repeat) is an adaptive immune system that provides protection against mobile genetic elements (viruses, transposable elements and conjugative plasmids). CRISPR clusters contain spacers, sequences complementary to antecedent mobile elements, and target invading nucleic acids. CRISPR clusters are transcribed and processed into CRISPR RNA (crRNA). The type III-A Csm effector complex binds crRNA and acts as a crRNA-guided RNase, DNase and cyclic oligoadenylate synthase; binding of target RNA cognate to the crRNA is required for all activities (Probable). This CRISPR-Cas system protects bacteria against transformation with plasmids containing DNA homologous to its spacer regions (PubMed:29979631).</text>
</comment>
<comment type="function">
    <text evidence="1">This subunit may be involved in monitoring complementarity of crRNA and target RNA.</text>
</comment>
<comment type="subunit">
    <text evidence="2">Part of the Csm effector complex that includes Cas10, Csm2, Csm3, Csm4 and Csm5.</text>
</comment>
<comment type="disruption phenotype">
    <text evidence="2">Deletion of the entire CRISPR-Cas locus (cas6 to cas2, Rv2824c to Rv2816c) decreases resistance to plasmids encoding spacer elements about 6-fold.</text>
</comment>
<comment type="miscellaneous">
    <text evidence="4">Encoded in a type III-A CRISPR locus.</text>
</comment>
<comment type="similarity">
    <text evidence="3">Belongs to the CRISPR-associated Csm2 family.</text>
</comment>
<keyword id="KW-0051">Antiviral defense</keyword>
<keyword id="KW-1185">Reference proteome</keyword>
<keyword id="KW-0694">RNA-binding</keyword>
<sequence length="124" mass="14287">MSVIQDDYVKQAEVIRGLPKKKNGFELTTTQLRVLLSLTAQLFDEAQQSANPTLPRQLKEKVQYLRVRFVYQSGREDAVKTFVRNAKLLEALEGIGDSRDGLLRFCRYMEALAAYKKYLDPKDK</sequence>